<feature type="chain" id="PRO_0000367435" description="Vacuolar protein sorting-associated protein 28">
    <location>
        <begin position="1"/>
        <end position="288"/>
    </location>
</feature>
<feature type="domain" description="VPS28 N-terminal" evidence="3">
    <location>
        <begin position="74"/>
        <end position="181"/>
    </location>
</feature>
<feature type="domain" description="VPS28 C-terminal" evidence="2">
    <location>
        <begin position="191"/>
        <end position="287"/>
    </location>
</feature>
<feature type="region of interest" description="Disordered" evidence="4">
    <location>
        <begin position="1"/>
        <end position="65"/>
    </location>
</feature>
<feature type="compositionally biased region" description="Polar residues" evidence="4">
    <location>
        <begin position="1"/>
        <end position="10"/>
    </location>
</feature>
<feature type="compositionally biased region" description="Low complexity" evidence="4">
    <location>
        <begin position="18"/>
        <end position="64"/>
    </location>
</feature>
<dbReference type="EMBL" id="AAFI02000077">
    <property type="protein sequence ID" value="EAL64811.1"/>
    <property type="molecule type" value="Genomic_DNA"/>
</dbReference>
<dbReference type="RefSeq" id="XP_638318.1">
    <property type="nucleotide sequence ID" value="XM_633226.1"/>
</dbReference>
<dbReference type="SMR" id="Q54NF1"/>
<dbReference type="FunCoup" id="Q54NF1">
    <property type="interactions" value="586"/>
</dbReference>
<dbReference type="STRING" id="44689.Q54NF1"/>
<dbReference type="PaxDb" id="44689-DDB0234023"/>
<dbReference type="EnsemblProtists" id="EAL64811">
    <property type="protein sequence ID" value="EAL64811"/>
    <property type="gene ID" value="DDB_G0285295"/>
</dbReference>
<dbReference type="GeneID" id="8625036"/>
<dbReference type="KEGG" id="ddi:DDB_G0285295"/>
<dbReference type="dictyBase" id="DDB_G0285295">
    <property type="gene designation" value="vps28"/>
</dbReference>
<dbReference type="VEuPathDB" id="AmoebaDB:DDB_G0285295"/>
<dbReference type="eggNOG" id="KOG3284">
    <property type="taxonomic scope" value="Eukaryota"/>
</dbReference>
<dbReference type="HOGENOM" id="CLU_076417_1_0_1"/>
<dbReference type="InParanoid" id="Q54NF1"/>
<dbReference type="OMA" id="KDYDLNC"/>
<dbReference type="PhylomeDB" id="Q54NF1"/>
<dbReference type="Reactome" id="R-DDI-917729">
    <property type="pathway name" value="Endosomal Sorting Complex Required For Transport (ESCRT)"/>
</dbReference>
<dbReference type="PRO" id="PR:Q54NF1"/>
<dbReference type="Proteomes" id="UP000002195">
    <property type="component" value="Chromosome 4"/>
</dbReference>
<dbReference type="GO" id="GO:0000813">
    <property type="term" value="C:ESCRT I complex"/>
    <property type="evidence" value="ECO:0000250"/>
    <property type="project" value="dictyBase"/>
</dbReference>
<dbReference type="GO" id="GO:0031902">
    <property type="term" value="C:late endosome membrane"/>
    <property type="evidence" value="ECO:0007669"/>
    <property type="project" value="UniProtKB-SubCell"/>
</dbReference>
<dbReference type="GO" id="GO:0044877">
    <property type="term" value="F:protein-containing complex binding"/>
    <property type="evidence" value="ECO:0000318"/>
    <property type="project" value="GO_Central"/>
</dbReference>
<dbReference type="GO" id="GO:0006605">
    <property type="term" value="P:protein targeting"/>
    <property type="evidence" value="ECO:0000250"/>
    <property type="project" value="dictyBase"/>
</dbReference>
<dbReference type="GO" id="GO:0043328">
    <property type="term" value="P:protein transport to vacuole involved in ubiquitin-dependent protein catabolic process via the multivesicular body sorting pathway"/>
    <property type="evidence" value="ECO:0000318"/>
    <property type="project" value="GO_Central"/>
</dbReference>
<dbReference type="FunFam" id="1.20.120.1130:FF:000001">
    <property type="entry name" value="Vacuolar protein sorting-associated protein 28 homolog"/>
    <property type="match status" value="1"/>
</dbReference>
<dbReference type="FunFam" id="1.20.1440.200:FF:000006">
    <property type="entry name" value="Vacuolar protein sorting-associated protein 28 homolog"/>
    <property type="match status" value="1"/>
</dbReference>
<dbReference type="Gene3D" id="1.20.120.1130">
    <property type="match status" value="1"/>
</dbReference>
<dbReference type="Gene3D" id="1.20.1440.200">
    <property type="match status" value="1"/>
</dbReference>
<dbReference type="InterPro" id="IPR037202">
    <property type="entry name" value="ESCRT_assembly_dom"/>
</dbReference>
<dbReference type="InterPro" id="IPR007143">
    <property type="entry name" value="Vps28"/>
</dbReference>
<dbReference type="InterPro" id="IPR017899">
    <property type="entry name" value="VPS28_C"/>
</dbReference>
<dbReference type="InterPro" id="IPR037206">
    <property type="entry name" value="VPS28_C_sf"/>
</dbReference>
<dbReference type="InterPro" id="IPR017898">
    <property type="entry name" value="VPS28_N"/>
</dbReference>
<dbReference type="InterPro" id="IPR038358">
    <property type="entry name" value="VPS28_N_sf"/>
</dbReference>
<dbReference type="PANTHER" id="PTHR12937">
    <property type="entry name" value="VACUOLAR PROTEIN SORTING 28, ISOFORM 2 VPS28"/>
    <property type="match status" value="1"/>
</dbReference>
<dbReference type="PANTHER" id="PTHR12937:SF0">
    <property type="entry name" value="VACUOLAR PROTEIN SORTING-ASSOCIATED PROTEIN 28 HOMOLOG"/>
    <property type="match status" value="1"/>
</dbReference>
<dbReference type="Pfam" id="PF03997">
    <property type="entry name" value="VPS28"/>
    <property type="match status" value="1"/>
</dbReference>
<dbReference type="SUPFAM" id="SSF140111">
    <property type="entry name" value="Endosomal sorting complex assembly domain"/>
    <property type="match status" value="1"/>
</dbReference>
<dbReference type="SUPFAM" id="SSF140427">
    <property type="entry name" value="VPS28 C-terminal domain-like"/>
    <property type="match status" value="1"/>
</dbReference>
<dbReference type="PROSITE" id="PS51310">
    <property type="entry name" value="VPS28_C"/>
    <property type="match status" value="1"/>
</dbReference>
<dbReference type="PROSITE" id="PS51313">
    <property type="entry name" value="VPS28_N"/>
    <property type="match status" value="1"/>
</dbReference>
<accession>Q54NF1</accession>
<gene>
    <name type="primary">vps28</name>
    <name type="ORF">DDB_G0285295</name>
</gene>
<protein>
    <recommendedName>
        <fullName>Vacuolar protein sorting-associated protein 28</fullName>
    </recommendedName>
    <alternativeName>
        <fullName>ESCRT-I complex subunit VPS28</fullName>
    </alternativeName>
</protein>
<organism>
    <name type="scientific">Dictyostelium discoideum</name>
    <name type="common">Social amoeba</name>
    <dbReference type="NCBI Taxonomy" id="44689"/>
    <lineage>
        <taxon>Eukaryota</taxon>
        <taxon>Amoebozoa</taxon>
        <taxon>Evosea</taxon>
        <taxon>Eumycetozoa</taxon>
        <taxon>Dictyostelia</taxon>
        <taxon>Dictyosteliales</taxon>
        <taxon>Dictyosteliaceae</taxon>
        <taxon>Dictyostelium</taxon>
    </lineage>
</organism>
<reference key="1">
    <citation type="journal article" date="2005" name="Nature">
        <title>The genome of the social amoeba Dictyostelium discoideum.</title>
        <authorList>
            <person name="Eichinger L."/>
            <person name="Pachebat J.A."/>
            <person name="Gloeckner G."/>
            <person name="Rajandream M.A."/>
            <person name="Sucgang R."/>
            <person name="Berriman M."/>
            <person name="Song J."/>
            <person name="Olsen R."/>
            <person name="Szafranski K."/>
            <person name="Xu Q."/>
            <person name="Tunggal B."/>
            <person name="Kummerfeld S."/>
            <person name="Madera M."/>
            <person name="Konfortov B.A."/>
            <person name="Rivero F."/>
            <person name="Bankier A.T."/>
            <person name="Lehmann R."/>
            <person name="Hamlin N."/>
            <person name="Davies R."/>
            <person name="Gaudet P."/>
            <person name="Fey P."/>
            <person name="Pilcher K."/>
            <person name="Chen G."/>
            <person name="Saunders D."/>
            <person name="Sodergren E.J."/>
            <person name="Davis P."/>
            <person name="Kerhornou A."/>
            <person name="Nie X."/>
            <person name="Hall N."/>
            <person name="Anjard C."/>
            <person name="Hemphill L."/>
            <person name="Bason N."/>
            <person name="Farbrother P."/>
            <person name="Desany B."/>
            <person name="Just E."/>
            <person name="Morio T."/>
            <person name="Rost R."/>
            <person name="Churcher C.M."/>
            <person name="Cooper J."/>
            <person name="Haydock S."/>
            <person name="van Driessche N."/>
            <person name="Cronin A."/>
            <person name="Goodhead I."/>
            <person name="Muzny D.M."/>
            <person name="Mourier T."/>
            <person name="Pain A."/>
            <person name="Lu M."/>
            <person name="Harper D."/>
            <person name="Lindsay R."/>
            <person name="Hauser H."/>
            <person name="James K.D."/>
            <person name="Quiles M."/>
            <person name="Madan Babu M."/>
            <person name="Saito T."/>
            <person name="Buchrieser C."/>
            <person name="Wardroper A."/>
            <person name="Felder M."/>
            <person name="Thangavelu M."/>
            <person name="Johnson D."/>
            <person name="Knights A."/>
            <person name="Loulseged H."/>
            <person name="Mungall K.L."/>
            <person name="Oliver K."/>
            <person name="Price C."/>
            <person name="Quail M.A."/>
            <person name="Urushihara H."/>
            <person name="Hernandez J."/>
            <person name="Rabbinowitsch E."/>
            <person name="Steffen D."/>
            <person name="Sanders M."/>
            <person name="Ma J."/>
            <person name="Kohara Y."/>
            <person name="Sharp S."/>
            <person name="Simmonds M.N."/>
            <person name="Spiegler S."/>
            <person name="Tivey A."/>
            <person name="Sugano S."/>
            <person name="White B."/>
            <person name="Walker D."/>
            <person name="Woodward J.R."/>
            <person name="Winckler T."/>
            <person name="Tanaka Y."/>
            <person name="Shaulsky G."/>
            <person name="Schleicher M."/>
            <person name="Weinstock G.M."/>
            <person name="Rosenthal A."/>
            <person name="Cox E.C."/>
            <person name="Chisholm R.L."/>
            <person name="Gibbs R.A."/>
            <person name="Loomis W.F."/>
            <person name="Platzer M."/>
            <person name="Kay R.R."/>
            <person name="Williams J.G."/>
            <person name="Dear P.H."/>
            <person name="Noegel A.A."/>
            <person name="Barrell B.G."/>
            <person name="Kuspa A."/>
        </authorList>
    </citation>
    <scope>NUCLEOTIDE SEQUENCE [LARGE SCALE GENOMIC DNA]</scope>
    <source>
        <strain>AX4</strain>
    </source>
</reference>
<name>VPS28_DICDI</name>
<sequence length="288" mass="32725">MNINNSNNNFGEPPPPYSFNNSPLSSSPLGPPTLNNSNTNNNNNNNSTNNNNNNNNNNNNNNSNKQFENMINLKSQNSFQNIKEVKLFNNNIEREMYENLAELYSIIKVTEHLEKAYIRDDVSPKDYTTACSKLIAQFKSSQTLLKDQVSNVGQFMKDYDLNCKAAFDRLVIKGFPSTLEHNTNESSTDSAMAKNVAEAVQLFITTMDSIRLKLVSVDGIYPLLSDLMESLNKNQWLGPTFEGKEKIKNWISILNQMKATDELDDDQSRQLLFDLDNSYNIFYKAIKS</sequence>
<keyword id="KW-0963">Cytoplasm</keyword>
<keyword id="KW-0967">Endosome</keyword>
<keyword id="KW-0472">Membrane</keyword>
<keyword id="KW-0653">Protein transport</keyword>
<keyword id="KW-1185">Reference proteome</keyword>
<keyword id="KW-0813">Transport</keyword>
<evidence type="ECO:0000250" key="1"/>
<evidence type="ECO:0000255" key="2">
    <source>
        <dbReference type="PROSITE-ProRule" id="PRU00642"/>
    </source>
</evidence>
<evidence type="ECO:0000255" key="3">
    <source>
        <dbReference type="PROSITE-ProRule" id="PRU00645"/>
    </source>
</evidence>
<evidence type="ECO:0000256" key="4">
    <source>
        <dbReference type="SAM" id="MobiDB-lite"/>
    </source>
</evidence>
<proteinExistence type="inferred from homology"/>
<comment type="function">
    <text evidence="1">Component of the ESCRT-I complex, a regulator of vesicular trafficking process.</text>
</comment>
<comment type="subunit">
    <text evidence="1">Component of the ESCRT-I complex (endosomal sorting complex required for transport I).</text>
</comment>
<comment type="subcellular location">
    <subcellularLocation>
        <location evidence="1">Cytoplasm</location>
    </subcellularLocation>
    <subcellularLocation>
        <location evidence="1">Endosome</location>
    </subcellularLocation>
    <subcellularLocation>
        <location evidence="1">Late endosome membrane</location>
        <topology evidence="1">Peripheral membrane protein</topology>
    </subcellularLocation>
</comment>
<comment type="similarity">
    <text evidence="2 3">Belongs to the VPS28 family.</text>
</comment>